<feature type="chain" id="PRO_0000078013" description="Uncharacterized protein HI_1246">
    <location>
        <begin position="1"/>
        <end position="647"/>
    </location>
</feature>
<feature type="transmembrane region" description="Helical" evidence="1">
    <location>
        <begin position="14"/>
        <end position="38"/>
    </location>
</feature>
<feature type="transmembrane region" description="Helical" evidence="1">
    <location>
        <begin position="61"/>
        <end position="78"/>
    </location>
</feature>
<feature type="transmembrane region" description="Helical" evidence="1">
    <location>
        <begin position="90"/>
        <end position="110"/>
    </location>
</feature>
<feature type="transmembrane region" description="Helical" evidence="1">
    <location>
        <begin position="140"/>
        <end position="158"/>
    </location>
</feature>
<feature type="transmembrane region" description="Helical" evidence="1">
    <location>
        <begin position="178"/>
        <end position="195"/>
    </location>
</feature>
<proteinExistence type="predicted"/>
<keyword id="KW-1003">Cell membrane</keyword>
<keyword id="KW-0472">Membrane</keyword>
<keyword id="KW-1185">Reference proteome</keyword>
<keyword id="KW-0812">Transmembrane</keyword>
<keyword id="KW-1133">Transmembrane helix</keyword>
<gene>
    <name type="ordered locus">HI_1246</name>
</gene>
<comment type="subcellular location">
    <subcellularLocation>
        <location evidence="2">Cell membrane</location>
        <topology evidence="2">Multi-pass membrane protein</topology>
    </subcellularLocation>
</comment>
<evidence type="ECO:0000255" key="1"/>
<evidence type="ECO:0000305" key="2"/>
<protein>
    <recommendedName>
        <fullName>Uncharacterized protein HI_1246</fullName>
    </recommendedName>
</protein>
<accession>P44135</accession>
<organism>
    <name type="scientific">Haemophilus influenzae (strain ATCC 51907 / DSM 11121 / KW20 / Rd)</name>
    <dbReference type="NCBI Taxonomy" id="71421"/>
    <lineage>
        <taxon>Bacteria</taxon>
        <taxon>Pseudomonadati</taxon>
        <taxon>Pseudomonadota</taxon>
        <taxon>Gammaproteobacteria</taxon>
        <taxon>Pasteurellales</taxon>
        <taxon>Pasteurellaceae</taxon>
        <taxon>Haemophilus</taxon>
    </lineage>
</organism>
<reference key="1">
    <citation type="journal article" date="1995" name="Science">
        <title>Whole-genome random sequencing and assembly of Haemophilus influenzae Rd.</title>
        <authorList>
            <person name="Fleischmann R.D."/>
            <person name="Adams M.D."/>
            <person name="White O."/>
            <person name="Clayton R.A."/>
            <person name="Kirkness E.F."/>
            <person name="Kerlavage A.R."/>
            <person name="Bult C.J."/>
            <person name="Tomb J.-F."/>
            <person name="Dougherty B.A."/>
            <person name="Merrick J.M."/>
            <person name="McKenney K."/>
            <person name="Sutton G.G."/>
            <person name="FitzHugh W."/>
            <person name="Fields C.A."/>
            <person name="Gocayne J.D."/>
            <person name="Scott J.D."/>
            <person name="Shirley R."/>
            <person name="Liu L.-I."/>
            <person name="Glodek A."/>
            <person name="Kelley J.M."/>
            <person name="Weidman J.F."/>
            <person name="Phillips C.A."/>
            <person name="Spriggs T."/>
            <person name="Hedblom E."/>
            <person name="Cotton M.D."/>
            <person name="Utterback T.R."/>
            <person name="Hanna M.C."/>
            <person name="Nguyen D.T."/>
            <person name="Saudek D.M."/>
            <person name="Brandon R.C."/>
            <person name="Fine L.D."/>
            <person name="Fritchman J.L."/>
            <person name="Fuhrmann J.L."/>
            <person name="Geoghagen N.S.M."/>
            <person name="Gnehm C.L."/>
            <person name="McDonald L.A."/>
            <person name="Small K.V."/>
            <person name="Fraser C.M."/>
            <person name="Smith H.O."/>
            <person name="Venter J.C."/>
        </authorList>
    </citation>
    <scope>NUCLEOTIDE SEQUENCE [LARGE SCALE GENOMIC DNA]</scope>
    <source>
        <strain>ATCC 51907 / DSM 11121 / KW20 / Rd</strain>
    </source>
</reference>
<sequence length="647" mass="72752">MLVVFTMKKAHSPLFPIFTFVLINLIILSLSRLGLAVWQSERVSAVDGWLQLFLQGVRMDVVALCYLFGVPALLTTLFHSSKVWVKILRLWLTFGSVFIIFMEIATPAFIETYDYRPNRLFIEYLIYPKEVFSMLAEGHLSAVIFSLVFTILAAVIYWKISGWAVKNLRSMSWKLRPVIALLVIVVSFLGARSSFQHRGINPAMVAFSSDALVNSLVLNSGYSVIYAAQQFKDEEKSSEMYGKMDADEMFRIVKASRGRPESDYISDKYPTLTKNVATYQGKPKNIVILLQESLGAQFIGTLGGKPLSPNVDQLAKEGWLFENLYATGTRSVRGIEATTAGFTPTPARAVVKLNNAQSGFFTIADLLHKQGYNTSFIYGGEKHFDNMASFFYGNGFKDIWDQQDYQNPKFTGTWGVSDEDLFDKANETFTKLQNEGKPFFSLVFSSSNHDPFEYPDGKIELYEQPKATRNNAAKYADYALGHFFKMAKQSNYWKDTIFLIIADHDSRVGGASLVPIKHFHIPALILGDGITPRRDSRLVSQIDMPTTLLSLAGVSGNYPMIGFDLTQDVNPDRAFMQYDQTQAMMKGNNDVVIQMPNKAAQGYHYDKSTETLTPKDVPDAMKKEALAHALLGSYLYKNRLYSSGENK</sequence>
<name>Y1246_HAEIN</name>
<dbReference type="EMBL" id="L42023">
    <property type="protein sequence ID" value="AAC22900.1"/>
    <property type="molecule type" value="Genomic_DNA"/>
</dbReference>
<dbReference type="PIR" id="I64022">
    <property type="entry name" value="I64022"/>
</dbReference>
<dbReference type="RefSeq" id="NP_439402.1">
    <property type="nucleotide sequence ID" value="NC_000907.1"/>
</dbReference>
<dbReference type="SMR" id="P44135"/>
<dbReference type="EnsemblBacteria" id="AAC22900">
    <property type="protein sequence ID" value="AAC22900"/>
    <property type="gene ID" value="HI_1246"/>
</dbReference>
<dbReference type="KEGG" id="hin:HI_1246"/>
<dbReference type="PATRIC" id="fig|71421.8.peg.1298"/>
<dbReference type="eggNOG" id="COG1368">
    <property type="taxonomic scope" value="Bacteria"/>
</dbReference>
<dbReference type="HOGENOM" id="CLU_014653_3_1_6"/>
<dbReference type="OrthoDB" id="9760224at2"/>
<dbReference type="PhylomeDB" id="P44135"/>
<dbReference type="BioCyc" id="HINF71421:G1GJ1-1276-MONOMER"/>
<dbReference type="Proteomes" id="UP000000579">
    <property type="component" value="Chromosome"/>
</dbReference>
<dbReference type="GO" id="GO:0016020">
    <property type="term" value="C:membrane"/>
    <property type="evidence" value="ECO:0000318"/>
    <property type="project" value="GO_Central"/>
</dbReference>
<dbReference type="GO" id="GO:0005886">
    <property type="term" value="C:plasma membrane"/>
    <property type="evidence" value="ECO:0007669"/>
    <property type="project" value="UniProtKB-SubCell"/>
</dbReference>
<dbReference type="GO" id="GO:0016740">
    <property type="term" value="F:transferase activity"/>
    <property type="evidence" value="ECO:0000318"/>
    <property type="project" value="GO_Central"/>
</dbReference>
<dbReference type="CDD" id="cd16015">
    <property type="entry name" value="LTA_synthase"/>
    <property type="match status" value="1"/>
</dbReference>
<dbReference type="Gene3D" id="3.30.1120.80">
    <property type="match status" value="1"/>
</dbReference>
<dbReference type="Gene3D" id="3.40.720.10">
    <property type="entry name" value="Alkaline Phosphatase, subunit A"/>
    <property type="match status" value="1"/>
</dbReference>
<dbReference type="InterPro" id="IPR017850">
    <property type="entry name" value="Alkaline_phosphatase_core_sf"/>
</dbReference>
<dbReference type="InterPro" id="IPR012160">
    <property type="entry name" value="LtaS-like"/>
</dbReference>
<dbReference type="InterPro" id="IPR050448">
    <property type="entry name" value="OpgB/LTA_synthase_biosynth"/>
</dbReference>
<dbReference type="InterPro" id="IPR000917">
    <property type="entry name" value="Sulfatase_N"/>
</dbReference>
<dbReference type="PANTHER" id="PTHR47371">
    <property type="entry name" value="LIPOTEICHOIC ACID SYNTHASE"/>
    <property type="match status" value="1"/>
</dbReference>
<dbReference type="PANTHER" id="PTHR47371:SF3">
    <property type="entry name" value="PHOSPHOGLYCEROL TRANSFERASE I"/>
    <property type="match status" value="1"/>
</dbReference>
<dbReference type="Pfam" id="PF00884">
    <property type="entry name" value="Sulfatase"/>
    <property type="match status" value="1"/>
</dbReference>
<dbReference type="PIRSF" id="PIRSF005091">
    <property type="entry name" value="Mmb_sulf_HI1246"/>
    <property type="match status" value="1"/>
</dbReference>
<dbReference type="SUPFAM" id="SSF53649">
    <property type="entry name" value="Alkaline phosphatase-like"/>
    <property type="match status" value="1"/>
</dbReference>